<reference key="1">
    <citation type="submission" date="2007-04" db="EMBL/GenBank/DDBJ databases">
        <title>Complete sequence of Shewanella putrefaciens CN-32.</title>
        <authorList>
            <consortium name="US DOE Joint Genome Institute"/>
            <person name="Copeland A."/>
            <person name="Lucas S."/>
            <person name="Lapidus A."/>
            <person name="Barry K."/>
            <person name="Detter J.C."/>
            <person name="Glavina del Rio T."/>
            <person name="Hammon N."/>
            <person name="Israni S."/>
            <person name="Dalin E."/>
            <person name="Tice H."/>
            <person name="Pitluck S."/>
            <person name="Chain P."/>
            <person name="Malfatti S."/>
            <person name="Shin M."/>
            <person name="Vergez L."/>
            <person name="Schmutz J."/>
            <person name="Larimer F."/>
            <person name="Land M."/>
            <person name="Hauser L."/>
            <person name="Kyrpides N."/>
            <person name="Mikhailova N."/>
            <person name="Romine M.F."/>
            <person name="Fredrickson J."/>
            <person name="Tiedje J."/>
            <person name="Richardson P."/>
        </authorList>
    </citation>
    <scope>NUCLEOTIDE SEQUENCE [LARGE SCALE GENOMIC DNA]</scope>
    <source>
        <strain>CN-32 / ATCC BAA-453</strain>
    </source>
</reference>
<name>F16PA_SHEPC</name>
<protein>
    <recommendedName>
        <fullName evidence="1">Fructose-1,6-bisphosphatase class 1</fullName>
        <shortName evidence="1">FBPase class 1</shortName>
        <ecNumber evidence="1">3.1.3.11</ecNumber>
    </recommendedName>
    <alternativeName>
        <fullName evidence="1">D-fructose-1,6-bisphosphate 1-phosphohydrolase class 1</fullName>
    </alternativeName>
</protein>
<proteinExistence type="inferred from homology"/>
<comment type="catalytic activity">
    <reaction evidence="1">
        <text>beta-D-fructose 1,6-bisphosphate + H2O = beta-D-fructose 6-phosphate + phosphate</text>
        <dbReference type="Rhea" id="RHEA:11064"/>
        <dbReference type="ChEBI" id="CHEBI:15377"/>
        <dbReference type="ChEBI" id="CHEBI:32966"/>
        <dbReference type="ChEBI" id="CHEBI:43474"/>
        <dbReference type="ChEBI" id="CHEBI:57634"/>
        <dbReference type="EC" id="3.1.3.11"/>
    </reaction>
</comment>
<comment type="cofactor">
    <cofactor evidence="1">
        <name>Mg(2+)</name>
        <dbReference type="ChEBI" id="CHEBI:18420"/>
    </cofactor>
    <text evidence="1">Binds 2 magnesium ions per subunit.</text>
</comment>
<comment type="pathway">
    <text evidence="1">Carbohydrate biosynthesis; gluconeogenesis.</text>
</comment>
<comment type="subunit">
    <text evidence="1">Homotetramer.</text>
</comment>
<comment type="subcellular location">
    <subcellularLocation>
        <location evidence="1">Cytoplasm</location>
    </subcellularLocation>
</comment>
<comment type="similarity">
    <text evidence="1">Belongs to the FBPase class 1 family.</text>
</comment>
<feature type="chain" id="PRO_0000364709" description="Fructose-1,6-bisphosphatase class 1">
    <location>
        <begin position="1"/>
        <end position="330"/>
    </location>
</feature>
<feature type="binding site" evidence="1">
    <location>
        <position position="84"/>
    </location>
    <ligand>
        <name>Mg(2+)</name>
        <dbReference type="ChEBI" id="CHEBI:18420"/>
        <label>1</label>
    </ligand>
</feature>
<feature type="binding site" evidence="1">
    <location>
        <position position="103"/>
    </location>
    <ligand>
        <name>Mg(2+)</name>
        <dbReference type="ChEBI" id="CHEBI:18420"/>
        <label>1</label>
    </ligand>
</feature>
<feature type="binding site" evidence="1">
    <location>
        <position position="103"/>
    </location>
    <ligand>
        <name>Mg(2+)</name>
        <dbReference type="ChEBI" id="CHEBI:18420"/>
        <label>2</label>
    </ligand>
</feature>
<feature type="binding site" evidence="1">
    <location>
        <position position="105"/>
    </location>
    <ligand>
        <name>Mg(2+)</name>
        <dbReference type="ChEBI" id="CHEBI:18420"/>
        <label>1</label>
    </ligand>
</feature>
<feature type="binding site" evidence="1">
    <location>
        <begin position="106"/>
        <end position="109"/>
    </location>
    <ligand>
        <name>substrate</name>
    </ligand>
</feature>
<feature type="binding site" evidence="1">
    <location>
        <position position="106"/>
    </location>
    <ligand>
        <name>Mg(2+)</name>
        <dbReference type="ChEBI" id="CHEBI:18420"/>
        <label>2</label>
    </ligand>
</feature>
<feature type="binding site" evidence="1">
    <location>
        <position position="196"/>
    </location>
    <ligand>
        <name>substrate</name>
    </ligand>
</feature>
<feature type="binding site" evidence="1">
    <location>
        <position position="262"/>
    </location>
    <ligand>
        <name>substrate</name>
    </ligand>
</feature>
<feature type="binding site" evidence="1">
    <location>
        <position position="268"/>
    </location>
    <ligand>
        <name>Mg(2+)</name>
        <dbReference type="ChEBI" id="CHEBI:18420"/>
        <label>2</label>
    </ligand>
</feature>
<sequence>MQTLAQHLTSQAVNDSLSQLILTLADTSKAISHAVRHGALAGVLGATEQENVQGETQKKLDIITNDMLKDALKADGTVRGLASEEEDHVVEVSTNGQYLVCFDPLDGSSNIDINSLVGTIFSILPASAGELTETSFLQSGRNQLAAGYVLYGPSTMLALTTGQGVQLFTLHPETNEFLLTNAAMSISADTQEFAINMSNQRFWEAPMQTYIADLLLGKIGPREKSFNMRWIAAMVGDVHRVLSRGGIFTYPTDNKDPKKPYKLRLMYEANPMAFLVEQAGGKASTGYETILDIQPTQIHQRVAVILGSSNEVDACLSYHGLDYSEEPSLD</sequence>
<organism>
    <name type="scientific">Shewanella putrefaciens (strain CN-32 / ATCC BAA-453)</name>
    <dbReference type="NCBI Taxonomy" id="319224"/>
    <lineage>
        <taxon>Bacteria</taxon>
        <taxon>Pseudomonadati</taxon>
        <taxon>Pseudomonadota</taxon>
        <taxon>Gammaproteobacteria</taxon>
        <taxon>Alteromonadales</taxon>
        <taxon>Shewanellaceae</taxon>
        <taxon>Shewanella</taxon>
    </lineage>
</organism>
<keyword id="KW-0119">Carbohydrate metabolism</keyword>
<keyword id="KW-0963">Cytoplasm</keyword>
<keyword id="KW-0378">Hydrolase</keyword>
<keyword id="KW-0460">Magnesium</keyword>
<keyword id="KW-0479">Metal-binding</keyword>
<dbReference type="EC" id="3.1.3.11" evidence="1"/>
<dbReference type="EMBL" id="CP000681">
    <property type="protein sequence ID" value="ABP74406.1"/>
    <property type="molecule type" value="Genomic_DNA"/>
</dbReference>
<dbReference type="SMR" id="A4Y373"/>
<dbReference type="STRING" id="319224.Sputcn32_0676"/>
<dbReference type="KEGG" id="spc:Sputcn32_0676"/>
<dbReference type="eggNOG" id="COG0158">
    <property type="taxonomic scope" value="Bacteria"/>
</dbReference>
<dbReference type="HOGENOM" id="CLU_039977_0_0_6"/>
<dbReference type="UniPathway" id="UPA00138"/>
<dbReference type="GO" id="GO:0005829">
    <property type="term" value="C:cytosol"/>
    <property type="evidence" value="ECO:0007669"/>
    <property type="project" value="TreeGrafter"/>
</dbReference>
<dbReference type="GO" id="GO:0042132">
    <property type="term" value="F:fructose 1,6-bisphosphate 1-phosphatase activity"/>
    <property type="evidence" value="ECO:0007669"/>
    <property type="project" value="UniProtKB-UniRule"/>
</dbReference>
<dbReference type="GO" id="GO:0000287">
    <property type="term" value="F:magnesium ion binding"/>
    <property type="evidence" value="ECO:0007669"/>
    <property type="project" value="UniProtKB-UniRule"/>
</dbReference>
<dbReference type="GO" id="GO:0030388">
    <property type="term" value="P:fructose 1,6-bisphosphate metabolic process"/>
    <property type="evidence" value="ECO:0007669"/>
    <property type="project" value="TreeGrafter"/>
</dbReference>
<dbReference type="GO" id="GO:0006002">
    <property type="term" value="P:fructose 6-phosphate metabolic process"/>
    <property type="evidence" value="ECO:0007669"/>
    <property type="project" value="TreeGrafter"/>
</dbReference>
<dbReference type="GO" id="GO:0006000">
    <property type="term" value="P:fructose metabolic process"/>
    <property type="evidence" value="ECO:0007669"/>
    <property type="project" value="TreeGrafter"/>
</dbReference>
<dbReference type="GO" id="GO:0006094">
    <property type="term" value="P:gluconeogenesis"/>
    <property type="evidence" value="ECO:0007669"/>
    <property type="project" value="UniProtKB-UniRule"/>
</dbReference>
<dbReference type="GO" id="GO:0005986">
    <property type="term" value="P:sucrose biosynthetic process"/>
    <property type="evidence" value="ECO:0007669"/>
    <property type="project" value="TreeGrafter"/>
</dbReference>
<dbReference type="CDD" id="cd00354">
    <property type="entry name" value="FBPase"/>
    <property type="match status" value="1"/>
</dbReference>
<dbReference type="FunFam" id="3.30.540.10:FF:000002">
    <property type="entry name" value="Fructose-1,6-bisphosphatase class 1"/>
    <property type="match status" value="1"/>
</dbReference>
<dbReference type="FunFam" id="3.40.190.80:FF:000011">
    <property type="entry name" value="Fructose-1,6-bisphosphatase class 1"/>
    <property type="match status" value="1"/>
</dbReference>
<dbReference type="Gene3D" id="3.40.190.80">
    <property type="match status" value="1"/>
</dbReference>
<dbReference type="Gene3D" id="3.30.540.10">
    <property type="entry name" value="Fructose-1,6-Bisphosphatase, subunit A, domain 1"/>
    <property type="match status" value="1"/>
</dbReference>
<dbReference type="HAMAP" id="MF_01855">
    <property type="entry name" value="FBPase_class1"/>
    <property type="match status" value="1"/>
</dbReference>
<dbReference type="InterPro" id="IPR044015">
    <property type="entry name" value="FBPase_C_dom"/>
</dbReference>
<dbReference type="InterPro" id="IPR000146">
    <property type="entry name" value="FBPase_class-1"/>
</dbReference>
<dbReference type="InterPro" id="IPR033391">
    <property type="entry name" value="FBPase_N"/>
</dbReference>
<dbReference type="InterPro" id="IPR028343">
    <property type="entry name" value="FBPtase"/>
</dbReference>
<dbReference type="NCBIfam" id="NF006779">
    <property type="entry name" value="PRK09293.1-3"/>
    <property type="match status" value="1"/>
</dbReference>
<dbReference type="NCBIfam" id="NF006780">
    <property type="entry name" value="PRK09293.1-4"/>
    <property type="match status" value="1"/>
</dbReference>
<dbReference type="PANTHER" id="PTHR11556">
    <property type="entry name" value="FRUCTOSE-1,6-BISPHOSPHATASE-RELATED"/>
    <property type="match status" value="1"/>
</dbReference>
<dbReference type="PANTHER" id="PTHR11556:SF35">
    <property type="entry name" value="SEDOHEPTULOSE-1,7-BISPHOSPHATASE, CHLOROPLASTIC"/>
    <property type="match status" value="1"/>
</dbReference>
<dbReference type="Pfam" id="PF00316">
    <property type="entry name" value="FBPase"/>
    <property type="match status" value="1"/>
</dbReference>
<dbReference type="Pfam" id="PF18913">
    <property type="entry name" value="FBPase_C"/>
    <property type="match status" value="1"/>
</dbReference>
<dbReference type="PIRSF" id="PIRSF500210">
    <property type="entry name" value="FBPtase"/>
    <property type="match status" value="1"/>
</dbReference>
<dbReference type="PIRSF" id="PIRSF000904">
    <property type="entry name" value="FBPtase_SBPase"/>
    <property type="match status" value="1"/>
</dbReference>
<dbReference type="PRINTS" id="PR00115">
    <property type="entry name" value="F16BPHPHTASE"/>
</dbReference>
<dbReference type="SUPFAM" id="SSF56655">
    <property type="entry name" value="Carbohydrate phosphatase"/>
    <property type="match status" value="1"/>
</dbReference>
<evidence type="ECO:0000255" key="1">
    <source>
        <dbReference type="HAMAP-Rule" id="MF_01855"/>
    </source>
</evidence>
<accession>A4Y373</accession>
<gene>
    <name evidence="1" type="primary">fbp</name>
    <name type="ordered locus">Sputcn32_0676</name>
</gene>